<comment type="function">
    <text evidence="1">Involved in the establishment and dorsoventral patterning of germ layers in the embryo.</text>
</comment>
<comment type="subunit">
    <text evidence="1">Efficient DNA binding requires dimerization with another bHLH protein. Homodimer (By similarity).</text>
</comment>
<comment type="subcellular location">
    <subcellularLocation>
        <location evidence="2">Nucleus</location>
    </subcellularLocation>
</comment>
<reference evidence="4" key="1">
    <citation type="journal article" date="2002" name="Genome Biol.">
        <title>Assessing the impact of comparative genomic sequence data on the functional annotation of the Drosophila genome.</title>
        <authorList>
            <person name="Bergman C.M."/>
            <person name="Pfeiffer B.D."/>
            <person name="Rincon-Limas D.E."/>
            <person name="Hoskins R.A."/>
            <person name="Gnirke A."/>
            <person name="Mungall C.J."/>
            <person name="Wang A.M."/>
            <person name="Kronmiller B."/>
            <person name="Pacleb J.M."/>
            <person name="Park S."/>
            <person name="Stapleton M."/>
            <person name="Wan K.H."/>
            <person name="George R.A."/>
            <person name="de Jong P.J."/>
            <person name="Botas J."/>
            <person name="Rubin G.M."/>
            <person name="Celniker S.E."/>
        </authorList>
    </citation>
    <scope>NUCLEOTIDE SEQUENCE [GENOMIC DNA]</scope>
</reference>
<feature type="chain" id="PRO_0000127477" description="Protein twist">
    <location>
        <begin position="1"/>
        <end position="490"/>
    </location>
</feature>
<feature type="domain" description="bHLH" evidence="2">
    <location>
        <begin position="362"/>
        <end position="413"/>
    </location>
</feature>
<feature type="region of interest" description="Disordered" evidence="3">
    <location>
        <begin position="48"/>
        <end position="74"/>
    </location>
</feature>
<feature type="region of interest" description="Disordered" evidence="3">
    <location>
        <begin position="98"/>
        <end position="167"/>
    </location>
</feature>
<feature type="region of interest" description="Disordered" evidence="3">
    <location>
        <begin position="330"/>
        <end position="359"/>
    </location>
</feature>
<feature type="compositionally biased region" description="Basic residues" evidence="3">
    <location>
        <begin position="54"/>
        <end position="64"/>
    </location>
</feature>
<feature type="compositionally biased region" description="Low complexity" evidence="3">
    <location>
        <begin position="65"/>
        <end position="74"/>
    </location>
</feature>
<feature type="compositionally biased region" description="Low complexity" evidence="3">
    <location>
        <begin position="104"/>
        <end position="135"/>
    </location>
</feature>
<feature type="compositionally biased region" description="Basic residues" evidence="3">
    <location>
        <begin position="339"/>
        <end position="351"/>
    </location>
</feature>
<proteinExistence type="inferred from homology"/>
<keyword id="KW-0217">Developmental protein</keyword>
<keyword id="KW-0221">Differentiation</keyword>
<keyword id="KW-0238">DNA-binding</keyword>
<keyword id="KW-0539">Nucleus</keyword>
<keyword id="KW-0804">Transcription</keyword>
<keyword id="KW-0805">Transcription regulation</keyword>
<evidence type="ECO:0000250" key="1">
    <source>
        <dbReference type="UniProtKB" id="P10627"/>
    </source>
</evidence>
<evidence type="ECO:0000255" key="2">
    <source>
        <dbReference type="PROSITE-ProRule" id="PRU00981"/>
    </source>
</evidence>
<evidence type="ECO:0000256" key="3">
    <source>
        <dbReference type="SAM" id="MobiDB-lite"/>
    </source>
</evidence>
<evidence type="ECO:0000312" key="4">
    <source>
        <dbReference type="EMBL" id="AAO01011.1"/>
    </source>
</evidence>
<gene>
    <name evidence="4" type="primary">twi</name>
</gene>
<dbReference type="EMBL" id="AY190941">
    <property type="protein sequence ID" value="AAO01011.1"/>
    <property type="molecule type" value="Genomic_DNA"/>
</dbReference>
<dbReference type="SMR" id="Q8I1G0"/>
<dbReference type="eggNOG" id="KOG4447">
    <property type="taxonomic scope" value="Eukaryota"/>
</dbReference>
<dbReference type="OrthoDB" id="8583783at2759"/>
<dbReference type="GO" id="GO:0005634">
    <property type="term" value="C:nucleus"/>
    <property type="evidence" value="ECO:0000250"/>
    <property type="project" value="UniProtKB"/>
</dbReference>
<dbReference type="GO" id="GO:0003677">
    <property type="term" value="F:DNA binding"/>
    <property type="evidence" value="ECO:0000250"/>
    <property type="project" value="UniProtKB"/>
</dbReference>
<dbReference type="GO" id="GO:0000981">
    <property type="term" value="F:DNA-binding transcription factor activity, RNA polymerase II-specific"/>
    <property type="evidence" value="ECO:0007669"/>
    <property type="project" value="TreeGrafter"/>
</dbReference>
<dbReference type="GO" id="GO:0046982">
    <property type="term" value="F:protein heterodimerization activity"/>
    <property type="evidence" value="ECO:0000250"/>
    <property type="project" value="UniProtKB"/>
</dbReference>
<dbReference type="GO" id="GO:0042803">
    <property type="term" value="F:protein homodimerization activity"/>
    <property type="evidence" value="ECO:0000250"/>
    <property type="project" value="UniProtKB"/>
</dbReference>
<dbReference type="GO" id="GO:0000977">
    <property type="term" value="F:RNA polymerase II transcription regulatory region sequence-specific DNA binding"/>
    <property type="evidence" value="ECO:0007669"/>
    <property type="project" value="TreeGrafter"/>
</dbReference>
<dbReference type="GO" id="GO:0007369">
    <property type="term" value="P:gastrulation"/>
    <property type="evidence" value="ECO:0000250"/>
    <property type="project" value="UniProtKB"/>
</dbReference>
<dbReference type="GO" id="GO:0007443">
    <property type="term" value="P:Malpighian tubule morphogenesis"/>
    <property type="evidence" value="ECO:0000250"/>
    <property type="project" value="UniProtKB"/>
</dbReference>
<dbReference type="GO" id="GO:0001710">
    <property type="term" value="P:mesodermal cell fate commitment"/>
    <property type="evidence" value="ECO:0000250"/>
    <property type="project" value="UniProtKB"/>
</dbReference>
<dbReference type="GO" id="GO:0016202">
    <property type="term" value="P:regulation of striated muscle tissue development"/>
    <property type="evidence" value="ECO:0000250"/>
    <property type="project" value="UniProtKB"/>
</dbReference>
<dbReference type="GO" id="GO:0007370">
    <property type="term" value="P:ventral furrow formation"/>
    <property type="evidence" value="ECO:0000250"/>
    <property type="project" value="UniProtKB"/>
</dbReference>
<dbReference type="CDD" id="cd11464">
    <property type="entry name" value="bHLH_TS_TWIST"/>
    <property type="match status" value="1"/>
</dbReference>
<dbReference type="FunFam" id="4.10.280.10:FF:000030">
    <property type="entry name" value="Twist transcription factor"/>
    <property type="match status" value="1"/>
</dbReference>
<dbReference type="Gene3D" id="4.10.280.10">
    <property type="entry name" value="Helix-loop-helix DNA-binding domain"/>
    <property type="match status" value="1"/>
</dbReference>
<dbReference type="InterPro" id="IPR011598">
    <property type="entry name" value="bHLH_dom"/>
</dbReference>
<dbReference type="InterPro" id="IPR050283">
    <property type="entry name" value="E-box_TF_Regulators"/>
</dbReference>
<dbReference type="InterPro" id="IPR036638">
    <property type="entry name" value="HLH_DNA-bd_sf"/>
</dbReference>
<dbReference type="InterPro" id="IPR015789">
    <property type="entry name" value="Twist-rel_bHLH"/>
</dbReference>
<dbReference type="PANTHER" id="PTHR23349">
    <property type="entry name" value="BASIC HELIX-LOOP-HELIX TRANSCRIPTION FACTOR, TWIST"/>
    <property type="match status" value="1"/>
</dbReference>
<dbReference type="PANTHER" id="PTHR23349:SF50">
    <property type="entry name" value="PROTEIN TWIST"/>
    <property type="match status" value="1"/>
</dbReference>
<dbReference type="Pfam" id="PF00010">
    <property type="entry name" value="HLH"/>
    <property type="match status" value="1"/>
</dbReference>
<dbReference type="SMART" id="SM00353">
    <property type="entry name" value="HLH"/>
    <property type="match status" value="1"/>
</dbReference>
<dbReference type="SUPFAM" id="SSF47459">
    <property type="entry name" value="HLH, helix-loop-helix DNA-binding domain"/>
    <property type="match status" value="1"/>
</dbReference>
<dbReference type="PROSITE" id="PS50888">
    <property type="entry name" value="BHLH"/>
    <property type="match status" value="1"/>
</dbReference>
<accession>Q8I1G0</accession>
<protein>
    <recommendedName>
        <fullName>Protein twist</fullName>
    </recommendedName>
</protein>
<organism>
    <name type="scientific">Drosophila erecta</name>
    <name type="common">Fruit fly</name>
    <dbReference type="NCBI Taxonomy" id="7220"/>
    <lineage>
        <taxon>Eukaryota</taxon>
        <taxon>Metazoa</taxon>
        <taxon>Ecdysozoa</taxon>
        <taxon>Arthropoda</taxon>
        <taxon>Hexapoda</taxon>
        <taxon>Insecta</taxon>
        <taxon>Pterygota</taxon>
        <taxon>Neoptera</taxon>
        <taxon>Endopterygota</taxon>
        <taxon>Diptera</taxon>
        <taxon>Brachycera</taxon>
        <taxon>Muscomorpha</taxon>
        <taxon>Ephydroidea</taxon>
        <taxon>Drosophilidae</taxon>
        <taxon>Drosophila</taxon>
        <taxon>Sophophora</taxon>
    </lineage>
</organism>
<name>TWIST_DROER</name>
<sequence length="490" mass="54495">MMSARSVSPKVLLDISYKPTLPNIMELQNNVIKLIQVEQQAYMQSGYQLQHQQQHLHSHQHHQQHQQQQQQHTQYAPLPSEYAAYGITELEDTDYNIPSNEVLSTSSNQSAQSTSLEMNNNNTSSNNTSSGNNPSGFDGQASSGSSWNEHGKRARSSGDYDCQTGGSLVMQPEHKKLIHQQQQQPQQQQQHQQHIYVDYLPTTVDEVAAAQSCPGVQSTCTSPQSHFDFPDEELPEHKAQVFLPLYNNQQQSQQQPHQQNHAQMHFQNAYRQSFESYEPANSLNGSAYSSSDRDDMEYARHNALSSVSDLNGGVMSPACLADDGSAGSLLDGSDAGGKAFRKPRRRLKRKPSKTEETDEFSNQRVMANVRERQRTQSLNDAFKSLQQIIPTLPSDKLSKIQTLKLATRYIDFLCRMLSSSDISLLKALEAQGSPSAYGSASSLLSAAANGAEADLKCLRKANGAPIIPPEKLSYLFGVWRMEGDAQHQKA</sequence>